<name>CRGD_MACFL</name>
<proteinExistence type="evidence at transcript level"/>
<protein>
    <recommendedName>
        <fullName>Gamma-crystallin D</fullName>
    </recommendedName>
    <alternativeName>
        <fullName>Gamma-D-crystallin</fullName>
    </alternativeName>
</protein>
<feature type="chain" id="PRO_0000289608" description="Gamma-crystallin D">
    <location>
        <begin position="1"/>
        <end position="174"/>
    </location>
</feature>
<feature type="domain" description="Beta/gamma crystallin 'Greek key' 1" evidence="2">
    <location>
        <begin position="2"/>
        <end position="40"/>
    </location>
</feature>
<feature type="domain" description="Beta/gamma crystallin 'Greek key' 2" evidence="2">
    <location>
        <begin position="41"/>
        <end position="83"/>
    </location>
</feature>
<feature type="domain" description="Beta/gamma crystallin 'Greek key' 3" evidence="2">
    <location>
        <begin position="88"/>
        <end position="128"/>
    </location>
</feature>
<feature type="domain" description="Beta/gamma crystallin 'Greek key' 4" evidence="2">
    <location>
        <begin position="129"/>
        <end position="171"/>
    </location>
</feature>
<feature type="region of interest" description="Connecting peptide">
    <location>
        <begin position="84"/>
        <end position="87"/>
    </location>
</feature>
<accession>Q5EF39</accession>
<gene>
    <name type="primary">CRYGD</name>
</gene>
<comment type="function">
    <text evidence="1">Crystallins are the dominant structural components of the vertebrate eye lens.</text>
</comment>
<comment type="subunit">
    <text evidence="1">Monomer.</text>
</comment>
<comment type="domain">
    <text>Has a two-domain beta-structure, folded into four very similar Greek key motifs.</text>
</comment>
<comment type="similarity">
    <text evidence="3">Belongs to the beta/gamma-crystallin family.</text>
</comment>
<keyword id="KW-0273">Eye lens protein</keyword>
<keyword id="KW-0677">Repeat</keyword>
<keyword id="KW-0716">Sensory transduction</keyword>
<evidence type="ECO:0000250" key="1"/>
<evidence type="ECO:0000255" key="2">
    <source>
        <dbReference type="PROSITE-ProRule" id="PRU00028"/>
    </source>
</evidence>
<evidence type="ECO:0000305" key="3"/>
<dbReference type="EMBL" id="AY898645">
    <property type="protein sequence ID" value="AAW82717.1"/>
    <property type="molecule type" value="mRNA"/>
</dbReference>
<dbReference type="SMR" id="Q5EF39"/>
<dbReference type="GO" id="GO:0005212">
    <property type="term" value="F:structural constituent of eye lens"/>
    <property type="evidence" value="ECO:0007669"/>
    <property type="project" value="UniProtKB-KW"/>
</dbReference>
<dbReference type="GO" id="GO:0002088">
    <property type="term" value="P:lens development in camera-type eye"/>
    <property type="evidence" value="ECO:0007669"/>
    <property type="project" value="TreeGrafter"/>
</dbReference>
<dbReference type="GO" id="GO:0007601">
    <property type="term" value="P:visual perception"/>
    <property type="evidence" value="ECO:0007669"/>
    <property type="project" value="TreeGrafter"/>
</dbReference>
<dbReference type="FunFam" id="2.60.20.10:FF:000001">
    <property type="entry name" value="Crystallin gamma S"/>
    <property type="match status" value="1"/>
</dbReference>
<dbReference type="FunFam" id="2.60.20.10:FF:000003">
    <property type="entry name" value="Crystallin gamma S"/>
    <property type="match status" value="1"/>
</dbReference>
<dbReference type="Gene3D" id="2.60.20.10">
    <property type="entry name" value="Crystallins"/>
    <property type="match status" value="2"/>
</dbReference>
<dbReference type="InterPro" id="IPR050252">
    <property type="entry name" value="Beta/Gamma-Crystallin"/>
</dbReference>
<dbReference type="InterPro" id="IPR001064">
    <property type="entry name" value="Beta/gamma_crystallin"/>
</dbReference>
<dbReference type="InterPro" id="IPR011024">
    <property type="entry name" value="G_crystallin-like"/>
</dbReference>
<dbReference type="PANTHER" id="PTHR11818">
    <property type="entry name" value="BETA/GAMMA CRYSTALLIN"/>
    <property type="match status" value="1"/>
</dbReference>
<dbReference type="PANTHER" id="PTHR11818:SF119">
    <property type="entry name" value="GAMMA-CRYSTALLIN D"/>
    <property type="match status" value="1"/>
</dbReference>
<dbReference type="Pfam" id="PF00030">
    <property type="entry name" value="Crystall"/>
    <property type="match status" value="2"/>
</dbReference>
<dbReference type="PRINTS" id="PR01367">
    <property type="entry name" value="BGCRYSTALLIN"/>
</dbReference>
<dbReference type="SMART" id="SM00247">
    <property type="entry name" value="XTALbg"/>
    <property type="match status" value="2"/>
</dbReference>
<dbReference type="SUPFAM" id="SSF49695">
    <property type="entry name" value="gamma-Crystallin-like"/>
    <property type="match status" value="1"/>
</dbReference>
<dbReference type="PROSITE" id="PS50915">
    <property type="entry name" value="CRYSTALLIN_BETA_GAMMA"/>
    <property type="match status" value="4"/>
</dbReference>
<reference key="1">
    <citation type="journal article" date="2005" name="FEBS J.">
        <title>Gamma-N-crystallin and the evolution of the betagamma-crystallin superfamily in vertebrates.</title>
        <authorList>
            <person name="Wistow G."/>
            <person name="Wyatt K."/>
            <person name="David L."/>
            <person name="Gao C."/>
            <person name="Bateman O."/>
            <person name="Bernstein S."/>
            <person name="Tomarev S."/>
            <person name="Segovia L."/>
            <person name="Slingsby C."/>
            <person name="Vihtelic T."/>
        </authorList>
    </citation>
    <scope>NUCLEOTIDE SEQUENCE [MRNA]</scope>
    <source>
        <tissue>Lens</tissue>
    </source>
</reference>
<organism>
    <name type="scientific">Macropus fuliginosus</name>
    <name type="common">Western gray kangaroo</name>
    <name type="synonym">Kangurus fuliginosus</name>
    <dbReference type="NCBI Taxonomy" id="9316"/>
    <lineage>
        <taxon>Eukaryota</taxon>
        <taxon>Metazoa</taxon>
        <taxon>Chordata</taxon>
        <taxon>Craniata</taxon>
        <taxon>Vertebrata</taxon>
        <taxon>Euteleostomi</taxon>
        <taxon>Mammalia</taxon>
        <taxon>Metatheria</taxon>
        <taxon>Diprotodontia</taxon>
        <taxon>Macropodidae</taxon>
        <taxon>Macropus</taxon>
    </lineage>
</organism>
<sequence length="174" mass="20974">MGKITFYEDRGFQGRCYECSSDHVNLQSYFSRCNSIRVDSGCWMIYERPNYSGYQYYLRRGEYPDYQDWMGFNDSIKSCRIIPYSGSHKMRLYEREDYKGQMMELTDDCSCVQDRFHLNEIHSLNVLDGCWILYEMPNYRGRQFLLRPGEYRRYLDWGAMNAKVGSLRRVIDVY</sequence>